<evidence type="ECO:0000250" key="1">
    <source>
        <dbReference type="UniProtKB" id="A6T923"/>
    </source>
</evidence>
<evidence type="ECO:0000250" key="2">
    <source>
        <dbReference type="UniProtKB" id="B8M9J8"/>
    </source>
</evidence>
<evidence type="ECO:0000269" key="3">
    <source>
    </source>
</evidence>
<evidence type="ECO:0000303" key="4">
    <source>
    </source>
</evidence>
<evidence type="ECO:0000305" key="5"/>
<name>ADAC_ASPNG</name>
<protein>
    <recommendedName>
        <fullName evidence="4">FAD-dependent monooxygenase adaC</fullName>
        <ecNumber evidence="3">1.14.14.-</ecNumber>
    </recommendedName>
    <alternativeName>
        <fullName evidence="4">2-acetyl-2-decarboxamidoanthrotainin biosynthesis cluster protein C</fullName>
    </alternativeName>
</protein>
<gene>
    <name evidence="4" type="primary">adaC</name>
    <name type="ORF">ATCC64974_92720</name>
</gene>
<proteinExistence type="evidence at protein level"/>
<feature type="chain" id="PRO_0000446347" description="FAD-dependent monooxygenase adaC">
    <location>
        <begin position="1"/>
        <end position="414"/>
    </location>
</feature>
<feature type="binding site" evidence="2">
    <location>
        <position position="32"/>
    </location>
    <ligand>
        <name>FAD</name>
        <dbReference type="ChEBI" id="CHEBI:57692"/>
    </ligand>
</feature>
<feature type="binding site" evidence="2">
    <location>
        <position position="43"/>
    </location>
    <ligand>
        <name>FAD</name>
        <dbReference type="ChEBI" id="CHEBI:57692"/>
    </ligand>
</feature>
<feature type="binding site" evidence="2">
    <location>
        <position position="115"/>
    </location>
    <ligand>
        <name>FAD</name>
        <dbReference type="ChEBI" id="CHEBI:57692"/>
    </ligand>
</feature>
<feature type="binding site" evidence="2">
    <location>
        <position position="325"/>
    </location>
    <ligand>
        <name>FAD</name>
        <dbReference type="ChEBI" id="CHEBI:57692"/>
    </ligand>
</feature>
<feature type="binding site" evidence="2">
    <location>
        <position position="338"/>
    </location>
    <ligand>
        <name>FAD</name>
        <dbReference type="ChEBI" id="CHEBI:57692"/>
    </ligand>
</feature>
<sequence length="414" mass="45561">MTPPILIIGAGLSGLTISRILTNASIPNIVFEASTPDRSQGYAISLREWGYTSLLTALGDLPLRSLTRGVAPDRILGGTGWIDQALRDNHTGNLLVAPDPEAKQCIVRANRNALRTWIADSGDEEVDIRYGHRLRSVQGSMGNVTATFDNGAKYQGSLVIAADGVHSSVRSQILPHVSPDIVPVVVYHGELELPRKEFDNLIRPHSGPSNILAGVGDGFNTPITVCNITPTHVHLDWSYSRPSTENKENKDPLYRPHVSAAEAKQIPPALLEEIASRDLARPWSQLLNAEALPTHRVFNWVSRCVSVTREDVNAAQKQGVVFIGDSWHAMPIFGGEGGNHALVDAVELAEALTGKEGNLDAAVTGYYDRAWRRCQEAVRRSRQRFFQLHRPMREWMEIAEKKKMMAAMKGVEAH</sequence>
<keyword id="KW-0274">FAD</keyword>
<keyword id="KW-0285">Flavoprotein</keyword>
<keyword id="KW-0503">Monooxygenase</keyword>
<keyword id="KW-0560">Oxidoreductase</keyword>
<comment type="function">
    <text evidence="3">FAD-dependent monooxygenase; part of the gene cluster that mediates the biosynthesis of the linear tetracyclic TAN-1612 neuropeptide Y receptor antagonist (PubMed:21866960). The decaketide backbone of TAN-1612 is synthesized by the non-reducing polyketide synthase adaA via condensation of one acetyl-CoA starter unit with 9 malonyl-CoA units. The FAD-dependent monooxygenase adaC then performs hydroxylation at C2 while the polaketide chain is still attached to the NRPKS adaA (PubMed:21866960). The alpha-hydroxylation step at C2 appears to be crucial for the following C18-C1 Claisen cyclization and release of the C9-hydroxyl version of TAN-1612 from the NRPKS adaA, two steps performed by the lactamase-like protein adaB (PubMed:21866960). Finally, the O-methyltransferase adaD performs the C9 O-methylation to complete the biosynthesis of TAN-1612 (PubMed:21866960).</text>
</comment>
<comment type="catalytic activity">
    <reaction evidence="3">
        <text>3-(2,4-dioxopentyl)-3,6,8,9-tetrahydroxy-1-oxo-1,2,3,4-tetrahydroanthracene-2-carboxyl-[ACP] + NADPH + O2 + H(+) = 3-(2,4-dioxopentyl)-2,3,6,8,9-pentahydroxy-1-oxo-1,2,3,4-tetrahydroanthracene-2-carboxyl-[ACP] + NADP(+) + H2O</text>
        <dbReference type="Rhea" id="RHEA:64092"/>
        <dbReference type="Rhea" id="RHEA-COMP:16518"/>
        <dbReference type="Rhea" id="RHEA-COMP:16520"/>
        <dbReference type="ChEBI" id="CHEBI:15377"/>
        <dbReference type="ChEBI" id="CHEBI:15378"/>
        <dbReference type="ChEBI" id="CHEBI:15379"/>
        <dbReference type="ChEBI" id="CHEBI:57783"/>
        <dbReference type="ChEBI" id="CHEBI:58349"/>
        <dbReference type="ChEBI" id="CHEBI:149687"/>
        <dbReference type="ChEBI" id="CHEBI:149688"/>
    </reaction>
    <physiologicalReaction direction="left-to-right" evidence="3">
        <dbReference type="Rhea" id="RHEA:64093"/>
    </physiologicalReaction>
</comment>
<comment type="cofactor">
    <cofactor evidence="1">
        <name>FAD</name>
        <dbReference type="ChEBI" id="CHEBI:57692"/>
    </cofactor>
</comment>
<comment type="pathway">
    <text evidence="3">Secondary metabolite biosynthesis.</text>
</comment>
<comment type="similarity">
    <text evidence="5">Belongs to the paxM FAD-dependent monooxygenase family.</text>
</comment>
<dbReference type="EC" id="1.14.14.-" evidence="3"/>
<dbReference type="EMBL" id="JN257714">
    <property type="protein sequence ID" value="AEN83887.1"/>
    <property type="molecule type" value="Genomic_DNA"/>
</dbReference>
<dbReference type="EMBL" id="OGUI01000016">
    <property type="protein sequence ID" value="SPB51662.1"/>
    <property type="molecule type" value="Genomic_DNA"/>
</dbReference>
<dbReference type="SMR" id="G3KLH4"/>
<dbReference type="PaxDb" id="5061-CADANGAP00008889"/>
<dbReference type="VEuPathDB" id="FungiDB:An11g07330"/>
<dbReference type="VEuPathDB" id="FungiDB:ASPNIDRAFT2_1139199"/>
<dbReference type="VEuPathDB" id="FungiDB:ATCC64974_92720"/>
<dbReference type="VEuPathDB" id="FungiDB:M747DRAFT_298771"/>
<dbReference type="OrthoDB" id="47494at2759"/>
<dbReference type="GO" id="GO:0071949">
    <property type="term" value="F:FAD binding"/>
    <property type="evidence" value="ECO:0007669"/>
    <property type="project" value="InterPro"/>
</dbReference>
<dbReference type="GO" id="GO:0004497">
    <property type="term" value="F:monooxygenase activity"/>
    <property type="evidence" value="ECO:0007669"/>
    <property type="project" value="UniProtKB-KW"/>
</dbReference>
<dbReference type="Gene3D" id="3.50.50.60">
    <property type="entry name" value="FAD/NAD(P)-binding domain"/>
    <property type="match status" value="1"/>
</dbReference>
<dbReference type="InterPro" id="IPR002938">
    <property type="entry name" value="FAD-bd"/>
</dbReference>
<dbReference type="InterPro" id="IPR036188">
    <property type="entry name" value="FAD/NAD-bd_sf"/>
</dbReference>
<dbReference type="PANTHER" id="PTHR47178:SF4">
    <property type="entry name" value="FAD-DEPENDENT MONOOXYGENASE APTC"/>
    <property type="match status" value="1"/>
</dbReference>
<dbReference type="PANTHER" id="PTHR47178">
    <property type="entry name" value="MONOOXYGENASE, FAD-BINDING"/>
    <property type="match status" value="1"/>
</dbReference>
<dbReference type="Pfam" id="PF01494">
    <property type="entry name" value="FAD_binding_3"/>
    <property type="match status" value="2"/>
</dbReference>
<dbReference type="PRINTS" id="PR00420">
    <property type="entry name" value="RNGMNOXGNASE"/>
</dbReference>
<dbReference type="SUPFAM" id="SSF51905">
    <property type="entry name" value="FAD/NAD(P)-binding domain"/>
    <property type="match status" value="1"/>
</dbReference>
<accession>G3KLH4</accession>
<reference key="1">
    <citation type="journal article" date="2011" name="J. Am. Chem. Soc.">
        <title>Comparative characterization of fungal anthracenone and naphthacenedione biosynthetic pathways reveals an alpha-hydroxylation-dependent Claisen-like cyclization catalyzed by a dimanganese thioesterase.</title>
        <authorList>
            <person name="Li Y."/>
            <person name="Chooi Y.H."/>
            <person name="Sheng Y."/>
            <person name="Valentine J.S."/>
            <person name="Tang Y."/>
        </authorList>
    </citation>
    <scope>NUCLEOTIDE SEQUENCE [GENOMIC DNA]</scope>
    <scope>IDENTIFICATION</scope>
    <scope>FUNCTION</scope>
    <scope>CATALYTIC ACTIVITY</scope>
    <scope>PATHWAY</scope>
    <source>
        <strain>ATCC 1015 / NV DSM 2061</strain>
    </source>
</reference>
<reference key="2">
    <citation type="journal article" date="2018" name="Front. Microbiol.">
        <title>Forward genetics by genome sequencing uncovers the central role of the Aspergillus niger goxB locus in hydrogen peroxide induced glucose oxidase expression.</title>
        <authorList>
            <person name="Laothanachareon T."/>
            <person name="Tamayo-Ramos J.A."/>
            <person name="Nijsse B."/>
            <person name="Schaap P.J."/>
        </authorList>
    </citation>
    <scope>NUCLEOTIDE SEQUENCE [LARGE SCALE GENOMIC DNA]</scope>
    <source>
        <strain>ATCC 64974 / FGSC A733 / N402</strain>
    </source>
</reference>
<organism>
    <name type="scientific">Aspergillus niger</name>
    <dbReference type="NCBI Taxonomy" id="5061"/>
    <lineage>
        <taxon>Eukaryota</taxon>
        <taxon>Fungi</taxon>
        <taxon>Dikarya</taxon>
        <taxon>Ascomycota</taxon>
        <taxon>Pezizomycotina</taxon>
        <taxon>Eurotiomycetes</taxon>
        <taxon>Eurotiomycetidae</taxon>
        <taxon>Eurotiales</taxon>
        <taxon>Aspergillaceae</taxon>
        <taxon>Aspergillus</taxon>
        <taxon>Aspergillus subgen. Circumdati</taxon>
    </lineage>
</organism>